<feature type="signal peptide" evidence="2">
    <location>
        <begin position="1"/>
        <end position="26"/>
    </location>
</feature>
<feature type="chain" id="PRO_0000290226" description="Transmembrane protein 182">
    <location>
        <begin position="27"/>
        <end position="229"/>
    </location>
</feature>
<feature type="topological domain" description="Extracellular" evidence="2">
    <location>
        <begin position="27"/>
        <end position="114"/>
    </location>
</feature>
<feature type="transmembrane region" description="Helical" evidence="2">
    <location>
        <begin position="115"/>
        <end position="135"/>
    </location>
</feature>
<feature type="topological domain" description="Cytoplasmic" evidence="2">
    <location>
        <begin position="136"/>
        <end position="153"/>
    </location>
</feature>
<feature type="transmembrane region" description="Helical" evidence="2">
    <location>
        <begin position="154"/>
        <end position="174"/>
    </location>
</feature>
<feature type="topological domain" description="Extracellular" evidence="2">
    <location>
        <begin position="175"/>
        <end position="200"/>
    </location>
</feature>
<feature type="transmembrane region" description="Helical" evidence="2">
    <location>
        <begin position="201"/>
        <end position="221"/>
    </location>
</feature>
<feature type="topological domain" description="Cytoplasmic" evidence="2">
    <location>
        <begin position="222"/>
        <end position="229"/>
    </location>
</feature>
<feature type="region of interest" description="Interaction with ITGB1" evidence="1">
    <location>
        <begin position="49"/>
        <end position="59"/>
    </location>
</feature>
<feature type="glycosylation site" description="N-linked (GlcNAc...) asparagine" evidence="2">
    <location>
        <position position="47"/>
    </location>
</feature>
<feature type="glycosylation site" description="N-linked (GlcNAc...) asparagine" evidence="2">
    <location>
        <position position="102"/>
    </location>
</feature>
<feature type="splice variant" id="VSP_026134" description="In isoform 3." evidence="7">
    <location>
        <begin position="1"/>
        <end position="119"/>
    </location>
</feature>
<feature type="splice variant" id="VSP_026135" description="In isoform 2." evidence="6 7">
    <location>
        <begin position="1"/>
        <end position="96"/>
    </location>
</feature>
<feature type="sequence variant" id="VAR_032773" description="In dbSNP:rs887987." evidence="3 4 5">
    <original>W</original>
    <variation>R</variation>
    <location>
        <position position="223"/>
    </location>
</feature>
<gene>
    <name type="primary">TMEM182</name>
    <name type="ORF">UNQ6974/PRO21957</name>
</gene>
<evidence type="ECO:0000250" key="1">
    <source>
        <dbReference type="UniProtKB" id="A0A1D5NY17"/>
    </source>
</evidence>
<evidence type="ECO:0000255" key="2"/>
<evidence type="ECO:0000269" key="3">
    <source>
    </source>
</evidence>
<evidence type="ECO:0000269" key="4">
    <source>
    </source>
</evidence>
<evidence type="ECO:0000269" key="5">
    <source>
    </source>
</evidence>
<evidence type="ECO:0000303" key="6">
    <source>
    </source>
</evidence>
<evidence type="ECO:0000303" key="7">
    <source>
    </source>
</evidence>
<evidence type="ECO:0000305" key="8"/>
<name>TM182_HUMAN</name>
<sequence length="229" mass="25879">MRLNIAIFFGALFGALGVLLFLVAFGSDYWLLATEVGRCSGEKNIENVTFHHEGFFWRCWFNGIVEENDSNIWKFWYTNQPPSKNCTHAYLSPYPFMRGEHNSTSYDSAVIYRGFWAVLMLLGVVAVVIASFLIICAAPFASHFLYKAGGGSYIAAGILFSLVVMLYVIWVQAVADMESYRNMKMKDCLDFTPSVLYGWSFFLAPAGIFFSLLAGLLFLVVGWHIQIHH</sequence>
<dbReference type="EMBL" id="AY358262">
    <property type="protein sequence ID" value="AAQ88629.1"/>
    <property type="molecule type" value="mRNA"/>
</dbReference>
<dbReference type="EMBL" id="AK054856">
    <property type="protein sequence ID" value="BAB70815.1"/>
    <property type="molecule type" value="mRNA"/>
</dbReference>
<dbReference type="EMBL" id="AK129862">
    <property type="protein sequence ID" value="BAC85244.1"/>
    <property type="molecule type" value="mRNA"/>
</dbReference>
<dbReference type="EMBL" id="AC007251">
    <property type="protein sequence ID" value="AAY14911.1"/>
    <property type="molecule type" value="Genomic_DNA"/>
</dbReference>
<dbReference type="EMBL" id="BC020898">
    <property type="protein sequence ID" value="AAH20898.1"/>
    <property type="molecule type" value="mRNA"/>
</dbReference>
<dbReference type="EMBL" id="BC073844">
    <property type="protein sequence ID" value="AAH73844.1"/>
    <property type="status" value="ALT_INIT"/>
    <property type="molecule type" value="mRNA"/>
</dbReference>
<dbReference type="EMBL" id="BC107694">
    <property type="protein sequence ID" value="AAI07695.1"/>
    <property type="status" value="ALT_INIT"/>
    <property type="molecule type" value="mRNA"/>
</dbReference>
<dbReference type="EMBL" id="BC130306">
    <property type="protein sequence ID" value="AAI30307.1"/>
    <property type="molecule type" value="mRNA"/>
</dbReference>
<dbReference type="EMBL" id="BC130308">
    <property type="protein sequence ID" value="AAI30309.1"/>
    <property type="molecule type" value="mRNA"/>
</dbReference>
<dbReference type="CCDS" id="CCDS2064.1">
    <molecule id="Q6ZP80-1"/>
</dbReference>
<dbReference type="CCDS" id="CCDS82490.1">
    <molecule id="Q6ZP80-2"/>
</dbReference>
<dbReference type="RefSeq" id="NP_001308274.2">
    <molecule id="Q6ZP80-2"/>
    <property type="nucleotide sequence ID" value="NM_001321345.2"/>
</dbReference>
<dbReference type="RefSeq" id="NP_653233.4">
    <molecule id="Q6ZP80-1"/>
    <property type="nucleotide sequence ID" value="NM_144632.4"/>
</dbReference>
<dbReference type="BioGRID" id="126258">
    <property type="interactions" value="22"/>
</dbReference>
<dbReference type="FunCoup" id="Q6ZP80">
    <property type="interactions" value="44"/>
</dbReference>
<dbReference type="IntAct" id="Q6ZP80">
    <property type="interactions" value="21"/>
</dbReference>
<dbReference type="STRING" id="9606.ENSP00000394178"/>
<dbReference type="GlyCosmos" id="Q6ZP80">
    <property type="glycosylation" value="2 sites, No reported glycans"/>
</dbReference>
<dbReference type="GlyGen" id="Q6ZP80">
    <property type="glycosylation" value="3 sites, 1 N-linked glycan (1 site)"/>
</dbReference>
<dbReference type="PhosphoSitePlus" id="Q6ZP80"/>
<dbReference type="BioMuta" id="TMEM182"/>
<dbReference type="DMDM" id="313104025"/>
<dbReference type="MassIVE" id="Q6ZP80"/>
<dbReference type="PaxDb" id="9606-ENSP00000394178"/>
<dbReference type="PeptideAtlas" id="Q6ZP80"/>
<dbReference type="ProteomicsDB" id="68063">
    <molecule id="Q6ZP80-1"/>
</dbReference>
<dbReference type="ProteomicsDB" id="68064">
    <molecule id="Q6ZP80-2"/>
</dbReference>
<dbReference type="Antibodypedia" id="66643">
    <property type="antibodies" value="19 antibodies from 13 providers"/>
</dbReference>
<dbReference type="DNASU" id="130827"/>
<dbReference type="Ensembl" id="ENST00000409528.5">
    <molecule id="Q6ZP80-2"/>
    <property type="protein sequence ID" value="ENSP00000387258.1"/>
    <property type="gene ID" value="ENSG00000170417.16"/>
</dbReference>
<dbReference type="Ensembl" id="ENST00000412401.3">
    <molecule id="Q6ZP80-1"/>
    <property type="protein sequence ID" value="ENSP00000394178.2"/>
    <property type="gene ID" value="ENSG00000170417.16"/>
</dbReference>
<dbReference type="GeneID" id="130827"/>
<dbReference type="KEGG" id="hsa:130827"/>
<dbReference type="MANE-Select" id="ENST00000412401.3">
    <property type="protein sequence ID" value="ENSP00000394178.2"/>
    <property type="RefSeq nucleotide sequence ID" value="NM_144632.5"/>
    <property type="RefSeq protein sequence ID" value="NP_653233.5"/>
</dbReference>
<dbReference type="UCSC" id="uc002tcd.5">
    <molecule id="Q6ZP80-1"/>
    <property type="organism name" value="human"/>
</dbReference>
<dbReference type="AGR" id="HGNC:26391"/>
<dbReference type="CTD" id="130827"/>
<dbReference type="DisGeNET" id="130827"/>
<dbReference type="GeneCards" id="TMEM182"/>
<dbReference type="HGNC" id="HGNC:26391">
    <property type="gene designation" value="TMEM182"/>
</dbReference>
<dbReference type="HPA" id="ENSG00000170417">
    <property type="expression patterns" value="Group enriched (heart muscle, skeletal muscle, tongue)"/>
</dbReference>
<dbReference type="neXtProt" id="NX_Q6ZP80"/>
<dbReference type="OpenTargets" id="ENSG00000170417"/>
<dbReference type="PharmGKB" id="PA162406075"/>
<dbReference type="VEuPathDB" id="HostDB:ENSG00000170417"/>
<dbReference type="eggNOG" id="ENOG502QVS4">
    <property type="taxonomic scope" value="Eukaryota"/>
</dbReference>
<dbReference type="GeneTree" id="ENSGT00390000017581"/>
<dbReference type="HOGENOM" id="CLU_146393_0_0_1"/>
<dbReference type="InParanoid" id="Q6ZP80"/>
<dbReference type="OMA" id="RYGWSFI"/>
<dbReference type="OrthoDB" id="9942154at2759"/>
<dbReference type="PAN-GO" id="Q6ZP80">
    <property type="GO annotations" value="0 GO annotations based on evolutionary models"/>
</dbReference>
<dbReference type="PhylomeDB" id="Q6ZP80"/>
<dbReference type="TreeFam" id="TF331344"/>
<dbReference type="PathwayCommons" id="Q6ZP80"/>
<dbReference type="SignaLink" id="Q6ZP80"/>
<dbReference type="BioGRID-ORCS" id="130827">
    <property type="hits" value="9 hits in 1162 CRISPR screens"/>
</dbReference>
<dbReference type="ChiTaRS" id="TMEM182">
    <property type="organism name" value="human"/>
</dbReference>
<dbReference type="GenomeRNAi" id="130827"/>
<dbReference type="Pharos" id="Q6ZP80">
    <property type="development level" value="Tdark"/>
</dbReference>
<dbReference type="PRO" id="PR:Q6ZP80"/>
<dbReference type="Proteomes" id="UP000005640">
    <property type="component" value="Chromosome 2"/>
</dbReference>
<dbReference type="RNAct" id="Q6ZP80">
    <property type="molecule type" value="protein"/>
</dbReference>
<dbReference type="Bgee" id="ENSG00000170417">
    <property type="expression patterns" value="Expressed in cardiac muscle of right atrium and 145 other cell types or tissues"/>
</dbReference>
<dbReference type="ExpressionAtlas" id="Q6ZP80">
    <property type="expression patterns" value="baseline and differential"/>
</dbReference>
<dbReference type="GO" id="GO:0005886">
    <property type="term" value="C:plasma membrane"/>
    <property type="evidence" value="ECO:0007669"/>
    <property type="project" value="UniProtKB-SubCell"/>
</dbReference>
<dbReference type="GO" id="GO:0007517">
    <property type="term" value="P:muscle organ development"/>
    <property type="evidence" value="ECO:0007669"/>
    <property type="project" value="UniProtKB-KW"/>
</dbReference>
<dbReference type="GO" id="GO:0014906">
    <property type="term" value="P:myotube cell development involved in skeletal muscle regeneration"/>
    <property type="evidence" value="ECO:0000250"/>
    <property type="project" value="UniProtKB"/>
</dbReference>
<dbReference type="GO" id="GO:0014908">
    <property type="term" value="P:myotube differentiation involved in skeletal muscle regeneration"/>
    <property type="evidence" value="ECO:0000250"/>
    <property type="project" value="UniProtKB"/>
</dbReference>
<dbReference type="GO" id="GO:0045662">
    <property type="term" value="P:negative regulation of myoblast differentiation"/>
    <property type="evidence" value="ECO:0000250"/>
    <property type="project" value="UniProtKB"/>
</dbReference>
<dbReference type="GO" id="GO:1901740">
    <property type="term" value="P:negative regulation of myoblast fusion"/>
    <property type="evidence" value="ECO:0000250"/>
    <property type="project" value="UniProtKB"/>
</dbReference>
<dbReference type="Gene3D" id="1.20.140.150">
    <property type="match status" value="1"/>
</dbReference>
<dbReference type="InterPro" id="IPR004031">
    <property type="entry name" value="PMP22/EMP/MP20/Claudin"/>
</dbReference>
<dbReference type="InterPro" id="IPR026763">
    <property type="entry name" value="TMEM182"/>
</dbReference>
<dbReference type="PANTHER" id="PTHR32012:SF0">
    <property type="entry name" value="TRANSMEMBRANE PROTEIN 182"/>
    <property type="match status" value="1"/>
</dbReference>
<dbReference type="PANTHER" id="PTHR32012">
    <property type="entry name" value="TRANSMEMBRANE PROTEIN 182-RELATED"/>
    <property type="match status" value="1"/>
</dbReference>
<dbReference type="Pfam" id="PF13903">
    <property type="entry name" value="Claudin_2"/>
    <property type="match status" value="1"/>
</dbReference>
<keyword id="KW-0025">Alternative splicing</keyword>
<keyword id="KW-1003">Cell membrane</keyword>
<keyword id="KW-0325">Glycoprotein</keyword>
<keyword id="KW-0472">Membrane</keyword>
<keyword id="KW-0517">Myogenesis</keyword>
<keyword id="KW-1267">Proteomics identification</keyword>
<keyword id="KW-1185">Reference proteome</keyword>
<keyword id="KW-0732">Signal</keyword>
<keyword id="KW-0812">Transmembrane</keyword>
<keyword id="KW-1133">Transmembrane helix</keyword>
<proteinExistence type="evidence at protein level"/>
<reference key="1">
    <citation type="journal article" date="2003" name="Genome Res.">
        <title>The secreted protein discovery initiative (SPDI), a large-scale effort to identify novel human secreted and transmembrane proteins: a bioinformatics assessment.</title>
        <authorList>
            <person name="Clark H.F."/>
            <person name="Gurney A.L."/>
            <person name="Abaya E."/>
            <person name="Baker K."/>
            <person name="Baldwin D.T."/>
            <person name="Brush J."/>
            <person name="Chen J."/>
            <person name="Chow B."/>
            <person name="Chui C."/>
            <person name="Crowley C."/>
            <person name="Currell B."/>
            <person name="Deuel B."/>
            <person name="Dowd P."/>
            <person name="Eaton D."/>
            <person name="Foster J.S."/>
            <person name="Grimaldi C."/>
            <person name="Gu Q."/>
            <person name="Hass P.E."/>
            <person name="Heldens S."/>
            <person name="Huang A."/>
            <person name="Kim H.S."/>
            <person name="Klimowski L."/>
            <person name="Jin Y."/>
            <person name="Johnson S."/>
            <person name="Lee J."/>
            <person name="Lewis L."/>
            <person name="Liao D."/>
            <person name="Mark M.R."/>
            <person name="Robbie E."/>
            <person name="Sanchez C."/>
            <person name="Schoenfeld J."/>
            <person name="Seshagiri S."/>
            <person name="Simmons L."/>
            <person name="Singh J."/>
            <person name="Smith V."/>
            <person name="Stinson J."/>
            <person name="Vagts A."/>
            <person name="Vandlen R.L."/>
            <person name="Watanabe C."/>
            <person name="Wieand D."/>
            <person name="Woods K."/>
            <person name="Xie M.-H."/>
            <person name="Yansura D.G."/>
            <person name="Yi S."/>
            <person name="Yu G."/>
            <person name="Yuan J."/>
            <person name="Zhang M."/>
            <person name="Zhang Z."/>
            <person name="Goddard A.D."/>
            <person name="Wood W.I."/>
            <person name="Godowski P.J."/>
            <person name="Gray A.M."/>
        </authorList>
    </citation>
    <scope>NUCLEOTIDE SEQUENCE [LARGE SCALE MRNA] (ISOFORM 1)</scope>
    <scope>VARIANT ARG-223</scope>
</reference>
<reference key="2">
    <citation type="journal article" date="2004" name="Nat. Genet.">
        <title>Complete sequencing and characterization of 21,243 full-length human cDNAs.</title>
        <authorList>
            <person name="Ota T."/>
            <person name="Suzuki Y."/>
            <person name="Nishikawa T."/>
            <person name="Otsuki T."/>
            <person name="Sugiyama T."/>
            <person name="Irie R."/>
            <person name="Wakamatsu A."/>
            <person name="Hayashi K."/>
            <person name="Sato H."/>
            <person name="Nagai K."/>
            <person name="Kimura K."/>
            <person name="Makita H."/>
            <person name="Sekine M."/>
            <person name="Obayashi M."/>
            <person name="Nishi T."/>
            <person name="Shibahara T."/>
            <person name="Tanaka T."/>
            <person name="Ishii S."/>
            <person name="Yamamoto J."/>
            <person name="Saito K."/>
            <person name="Kawai Y."/>
            <person name="Isono Y."/>
            <person name="Nakamura Y."/>
            <person name="Nagahari K."/>
            <person name="Murakami K."/>
            <person name="Yasuda T."/>
            <person name="Iwayanagi T."/>
            <person name="Wagatsuma M."/>
            <person name="Shiratori A."/>
            <person name="Sudo H."/>
            <person name="Hosoiri T."/>
            <person name="Kaku Y."/>
            <person name="Kodaira H."/>
            <person name="Kondo H."/>
            <person name="Sugawara M."/>
            <person name="Takahashi M."/>
            <person name="Kanda K."/>
            <person name="Yokoi T."/>
            <person name="Furuya T."/>
            <person name="Kikkawa E."/>
            <person name="Omura Y."/>
            <person name="Abe K."/>
            <person name="Kamihara K."/>
            <person name="Katsuta N."/>
            <person name="Sato K."/>
            <person name="Tanikawa M."/>
            <person name="Yamazaki M."/>
            <person name="Ninomiya K."/>
            <person name="Ishibashi T."/>
            <person name="Yamashita H."/>
            <person name="Murakawa K."/>
            <person name="Fujimori K."/>
            <person name="Tanai H."/>
            <person name="Kimata M."/>
            <person name="Watanabe M."/>
            <person name="Hiraoka S."/>
            <person name="Chiba Y."/>
            <person name="Ishida S."/>
            <person name="Ono Y."/>
            <person name="Takiguchi S."/>
            <person name="Watanabe S."/>
            <person name="Yosida M."/>
            <person name="Hotuta T."/>
            <person name="Kusano J."/>
            <person name="Kanehori K."/>
            <person name="Takahashi-Fujii A."/>
            <person name="Hara H."/>
            <person name="Tanase T.-O."/>
            <person name="Nomura Y."/>
            <person name="Togiya S."/>
            <person name="Komai F."/>
            <person name="Hara R."/>
            <person name="Takeuchi K."/>
            <person name="Arita M."/>
            <person name="Imose N."/>
            <person name="Musashino K."/>
            <person name="Yuuki H."/>
            <person name="Oshima A."/>
            <person name="Sasaki N."/>
            <person name="Aotsuka S."/>
            <person name="Yoshikawa Y."/>
            <person name="Matsunawa H."/>
            <person name="Ichihara T."/>
            <person name="Shiohata N."/>
            <person name="Sano S."/>
            <person name="Moriya S."/>
            <person name="Momiyama H."/>
            <person name="Satoh N."/>
            <person name="Takami S."/>
            <person name="Terashima Y."/>
            <person name="Suzuki O."/>
            <person name="Nakagawa S."/>
            <person name="Senoh A."/>
            <person name="Mizoguchi H."/>
            <person name="Goto Y."/>
            <person name="Shimizu F."/>
            <person name="Wakebe H."/>
            <person name="Hishigaki H."/>
            <person name="Watanabe T."/>
            <person name="Sugiyama A."/>
            <person name="Takemoto M."/>
            <person name="Kawakami B."/>
            <person name="Yamazaki M."/>
            <person name="Watanabe K."/>
            <person name="Kumagai A."/>
            <person name="Itakura S."/>
            <person name="Fukuzumi Y."/>
            <person name="Fujimori Y."/>
            <person name="Komiyama M."/>
            <person name="Tashiro H."/>
            <person name="Tanigami A."/>
            <person name="Fujiwara T."/>
            <person name="Ono T."/>
            <person name="Yamada K."/>
            <person name="Fujii Y."/>
            <person name="Ozaki K."/>
            <person name="Hirao M."/>
            <person name="Ohmori Y."/>
            <person name="Kawabata A."/>
            <person name="Hikiji T."/>
            <person name="Kobatake N."/>
            <person name="Inagaki H."/>
            <person name="Ikema Y."/>
            <person name="Okamoto S."/>
            <person name="Okitani R."/>
            <person name="Kawakami T."/>
            <person name="Noguchi S."/>
            <person name="Itoh T."/>
            <person name="Shigeta K."/>
            <person name="Senba T."/>
            <person name="Matsumura K."/>
            <person name="Nakajima Y."/>
            <person name="Mizuno T."/>
            <person name="Morinaga M."/>
            <person name="Sasaki M."/>
            <person name="Togashi T."/>
            <person name="Oyama M."/>
            <person name="Hata H."/>
            <person name="Watanabe M."/>
            <person name="Komatsu T."/>
            <person name="Mizushima-Sugano J."/>
            <person name="Satoh T."/>
            <person name="Shirai Y."/>
            <person name="Takahashi Y."/>
            <person name="Nakagawa K."/>
            <person name="Okumura K."/>
            <person name="Nagase T."/>
            <person name="Nomura N."/>
            <person name="Kikuchi H."/>
            <person name="Masuho Y."/>
            <person name="Yamashita R."/>
            <person name="Nakai K."/>
            <person name="Yada T."/>
            <person name="Nakamura Y."/>
            <person name="Ohara O."/>
            <person name="Isogai T."/>
            <person name="Sugano S."/>
        </authorList>
    </citation>
    <scope>NUCLEOTIDE SEQUENCE [LARGE SCALE MRNA] (ISOFORMS 1 AND 2)</scope>
    <scope>VARIANT ARG-223</scope>
    <source>
        <tissue>Cerebellum</tissue>
        <tissue>Heart</tissue>
    </source>
</reference>
<reference key="3">
    <citation type="journal article" date="2005" name="Nature">
        <title>Generation and annotation of the DNA sequences of human chromosomes 2 and 4.</title>
        <authorList>
            <person name="Hillier L.W."/>
            <person name="Graves T.A."/>
            <person name="Fulton R.S."/>
            <person name="Fulton L.A."/>
            <person name="Pepin K.H."/>
            <person name="Minx P."/>
            <person name="Wagner-McPherson C."/>
            <person name="Layman D."/>
            <person name="Wylie K."/>
            <person name="Sekhon M."/>
            <person name="Becker M.C."/>
            <person name="Fewell G.A."/>
            <person name="Delehaunty K.D."/>
            <person name="Miner T.L."/>
            <person name="Nash W.E."/>
            <person name="Kremitzki C."/>
            <person name="Oddy L."/>
            <person name="Du H."/>
            <person name="Sun H."/>
            <person name="Bradshaw-Cordum H."/>
            <person name="Ali J."/>
            <person name="Carter J."/>
            <person name="Cordes M."/>
            <person name="Harris A."/>
            <person name="Isak A."/>
            <person name="van Brunt A."/>
            <person name="Nguyen C."/>
            <person name="Du F."/>
            <person name="Courtney L."/>
            <person name="Kalicki J."/>
            <person name="Ozersky P."/>
            <person name="Abbott S."/>
            <person name="Armstrong J."/>
            <person name="Belter E.A."/>
            <person name="Caruso L."/>
            <person name="Cedroni M."/>
            <person name="Cotton M."/>
            <person name="Davidson T."/>
            <person name="Desai A."/>
            <person name="Elliott G."/>
            <person name="Erb T."/>
            <person name="Fronick C."/>
            <person name="Gaige T."/>
            <person name="Haakenson W."/>
            <person name="Haglund K."/>
            <person name="Holmes A."/>
            <person name="Harkins R."/>
            <person name="Kim K."/>
            <person name="Kruchowski S.S."/>
            <person name="Strong C.M."/>
            <person name="Grewal N."/>
            <person name="Goyea E."/>
            <person name="Hou S."/>
            <person name="Levy A."/>
            <person name="Martinka S."/>
            <person name="Mead K."/>
            <person name="McLellan M.D."/>
            <person name="Meyer R."/>
            <person name="Randall-Maher J."/>
            <person name="Tomlinson C."/>
            <person name="Dauphin-Kohlberg S."/>
            <person name="Kozlowicz-Reilly A."/>
            <person name="Shah N."/>
            <person name="Swearengen-Shahid S."/>
            <person name="Snider J."/>
            <person name="Strong J.T."/>
            <person name="Thompson J."/>
            <person name="Yoakum M."/>
            <person name="Leonard S."/>
            <person name="Pearman C."/>
            <person name="Trani L."/>
            <person name="Radionenko M."/>
            <person name="Waligorski J.E."/>
            <person name="Wang C."/>
            <person name="Rock S.M."/>
            <person name="Tin-Wollam A.-M."/>
            <person name="Maupin R."/>
            <person name="Latreille P."/>
            <person name="Wendl M.C."/>
            <person name="Yang S.-P."/>
            <person name="Pohl C."/>
            <person name="Wallis J.W."/>
            <person name="Spieth J."/>
            <person name="Bieri T.A."/>
            <person name="Berkowicz N."/>
            <person name="Nelson J.O."/>
            <person name="Osborne J."/>
            <person name="Ding L."/>
            <person name="Meyer R."/>
            <person name="Sabo A."/>
            <person name="Shotland Y."/>
            <person name="Sinha P."/>
            <person name="Wohldmann P.E."/>
            <person name="Cook L.L."/>
            <person name="Hickenbotham M.T."/>
            <person name="Eldred J."/>
            <person name="Williams D."/>
            <person name="Jones T.A."/>
            <person name="She X."/>
            <person name="Ciccarelli F.D."/>
            <person name="Izaurralde E."/>
            <person name="Taylor J."/>
            <person name="Schmutz J."/>
            <person name="Myers R.M."/>
            <person name="Cox D.R."/>
            <person name="Huang X."/>
            <person name="McPherson J.D."/>
            <person name="Mardis E.R."/>
            <person name="Clifton S.W."/>
            <person name="Warren W.C."/>
            <person name="Chinwalla A.T."/>
            <person name="Eddy S.R."/>
            <person name="Marra M.A."/>
            <person name="Ovcharenko I."/>
            <person name="Furey T.S."/>
            <person name="Miller W."/>
            <person name="Eichler E.E."/>
            <person name="Bork P."/>
            <person name="Suyama M."/>
            <person name="Torrents D."/>
            <person name="Waterston R.H."/>
            <person name="Wilson R.K."/>
        </authorList>
    </citation>
    <scope>NUCLEOTIDE SEQUENCE [LARGE SCALE GENOMIC DNA]</scope>
</reference>
<reference key="4">
    <citation type="journal article" date="2004" name="Genome Res.">
        <title>The status, quality, and expansion of the NIH full-length cDNA project: the Mammalian Gene Collection (MGC).</title>
        <authorList>
            <consortium name="The MGC Project Team"/>
        </authorList>
    </citation>
    <scope>NUCLEOTIDE SEQUENCE [LARGE SCALE MRNA] (ISOFORMS 1; 2 AND 3)</scope>
    <scope>VARIANT ARG-223</scope>
    <source>
        <tissue>Liver</tissue>
        <tissue>Placenta</tissue>
        <tissue>Prostate</tissue>
    </source>
</reference>
<protein>
    <recommendedName>
        <fullName>Transmembrane protein 182</fullName>
    </recommendedName>
</protein>
<accession>Q6ZP80</accession>
<accession>C9JML7</accession>
<accession>Q3B7B8</accession>
<accession>Q53TT9</accession>
<accession>Q6GMU0</accession>
<accession>Q8WW45</accession>
<accession>Q96NR4</accession>
<organism>
    <name type="scientific">Homo sapiens</name>
    <name type="common">Human</name>
    <dbReference type="NCBI Taxonomy" id="9606"/>
    <lineage>
        <taxon>Eukaryota</taxon>
        <taxon>Metazoa</taxon>
        <taxon>Chordata</taxon>
        <taxon>Craniata</taxon>
        <taxon>Vertebrata</taxon>
        <taxon>Euteleostomi</taxon>
        <taxon>Mammalia</taxon>
        <taxon>Eutheria</taxon>
        <taxon>Euarchontoglires</taxon>
        <taxon>Primates</taxon>
        <taxon>Haplorrhini</taxon>
        <taxon>Catarrhini</taxon>
        <taxon>Hominidae</taxon>
        <taxon>Homo</taxon>
    </lineage>
</organism>
<comment type="function">
    <text evidence="1">Negatively regulates myogenesis and skeletal muscle regeneration via its association with ITGB1 (By similarity). Modulates ITGB1 activation by decreasing ITGB1-LAMB1 interaction and inhibiting ITGB1-mediated intracellular signaling during myogenesis (By similarity).</text>
</comment>
<comment type="subunit">
    <text evidence="1">Interacts with ITGB1.</text>
</comment>
<comment type="interaction">
    <interactant intactId="EBI-10255122">
        <id>Q6ZP80</id>
    </interactant>
    <interactant intactId="EBI-18400628">
        <id>O00501</id>
        <label>CLDN5</label>
    </interactant>
    <organismsDiffer>false</organismsDiffer>
    <experiments>3</experiments>
</comment>
<comment type="interaction">
    <interactant intactId="EBI-10255122">
        <id>Q6ZP80</id>
    </interactant>
    <interactant intactId="EBI-12142257">
        <id>Q8TBE3</id>
        <label>FNDC9</label>
    </interactant>
    <organismsDiffer>false</organismsDiffer>
    <experiments>3</experiments>
</comment>
<comment type="interaction">
    <interactant intactId="EBI-10255122">
        <id>Q6ZP80</id>
    </interactant>
    <interactant intactId="EBI-17458373">
        <id>P48165</id>
        <label>GJA8</label>
    </interactant>
    <organismsDiffer>false</organismsDiffer>
    <experiments>3</experiments>
</comment>
<comment type="interaction">
    <interactant intactId="EBI-10255122">
        <id>Q6ZP80</id>
    </interactant>
    <interactant intactId="EBI-18076404">
        <id>O15529</id>
        <label>GPR42</label>
    </interactant>
    <organismsDiffer>false</organismsDiffer>
    <experiments>3</experiments>
</comment>
<comment type="interaction">
    <interactant intactId="EBI-10255122">
        <id>Q6ZP80</id>
    </interactant>
    <interactant intactId="EBI-9018187">
        <id>P26715</id>
        <label>KLRC1</label>
    </interactant>
    <organismsDiffer>false</organismsDiffer>
    <experiments>3</experiments>
</comment>
<comment type="interaction">
    <interactant intactId="EBI-10255122">
        <id>Q6ZP80</id>
    </interactant>
    <interactant intactId="EBI-1170392">
        <id>P17931</id>
        <label>LGALS3</label>
    </interactant>
    <organismsDiffer>false</organismsDiffer>
    <experiments>2</experiments>
</comment>
<comment type="interaction">
    <interactant intactId="EBI-10255122">
        <id>Q6ZP80</id>
    </interactant>
    <interactant intactId="EBI-750078">
        <id>Q13021</id>
        <label>MALL</label>
    </interactant>
    <organismsDiffer>false</organismsDiffer>
    <experiments>3</experiments>
</comment>
<comment type="interaction">
    <interactant intactId="EBI-10255122">
        <id>Q6ZP80</id>
    </interactant>
    <interactant intactId="EBI-12806656">
        <id>Q96HJ5</id>
        <label>MS4A3</label>
    </interactant>
    <organismsDiffer>false</organismsDiffer>
    <experiments>5</experiments>
</comment>
<comment type="interaction">
    <interactant intactId="EBI-10255122">
        <id>Q6ZP80</id>
    </interactant>
    <interactant intactId="EBI-12188331">
        <id>P60201-2</id>
        <label>PLP1</label>
    </interactant>
    <organismsDiffer>false</organismsDiffer>
    <experiments>3</experiments>
</comment>
<comment type="interaction">
    <interactant intactId="EBI-10255122">
        <id>Q6ZP80</id>
    </interactant>
    <interactant intactId="EBI-741850">
        <id>Q9BZL3</id>
        <label>SMIM3</label>
    </interactant>
    <organismsDiffer>false</organismsDiffer>
    <experiments>3</experiments>
</comment>
<comment type="interaction">
    <interactant intactId="EBI-10255122">
        <id>Q6ZP80</id>
    </interactant>
    <interactant intactId="EBI-18194029">
        <id>Q96L08</id>
        <label>SUSD3</label>
    </interactant>
    <organismsDiffer>false</organismsDiffer>
    <experiments>3</experiments>
</comment>
<comment type="interaction">
    <interactant intactId="EBI-10255122">
        <id>Q6ZP80</id>
    </interactant>
    <interactant intactId="EBI-7131783">
        <id>Q8N205</id>
        <label>SYNE4</label>
    </interactant>
    <organismsDiffer>false</organismsDiffer>
    <experiments>3</experiments>
</comment>
<comment type="interaction">
    <interactant intactId="EBI-10255122">
        <id>Q6ZP80</id>
    </interactant>
    <interactant intactId="EBI-2844246">
        <id>Q9NV12</id>
        <label>TMEM140</label>
    </interactant>
    <organismsDiffer>false</organismsDiffer>
    <experiments>3</experiments>
</comment>
<comment type="interaction">
    <interactant intactId="EBI-10255122">
        <id>Q6ZP80</id>
    </interactant>
    <interactant intactId="EBI-10173151">
        <id>A2RU14</id>
        <label>TMEM218</label>
    </interactant>
    <organismsDiffer>false</organismsDiffer>
    <experiments>3</experiments>
</comment>
<comment type="interaction">
    <interactant intactId="EBI-10255122">
        <id>Q6ZP80</id>
    </interactant>
    <interactant intactId="EBI-2466403">
        <id>O95859</id>
        <label>TSPAN12</label>
    </interactant>
    <organismsDiffer>false</organismsDiffer>
    <experiments>3</experiments>
</comment>
<comment type="subcellular location">
    <subcellularLocation>
        <location evidence="1">Cell membrane</location>
        <topology evidence="2">Multi-pass membrane protein</topology>
    </subcellularLocation>
</comment>
<comment type="alternative products">
    <event type="alternative splicing"/>
    <isoform>
        <id>Q6ZP80-1</id>
        <name>1</name>
        <sequence type="displayed"/>
    </isoform>
    <isoform>
        <id>Q6ZP80-2</id>
        <name>2</name>
        <sequence type="described" ref="VSP_026135"/>
    </isoform>
    <isoform>
        <id>Q6ZP80-3</id>
        <name>3</name>
        <sequence type="described" ref="VSP_026134"/>
    </isoform>
</comment>
<comment type="similarity">
    <text evidence="8">Belongs to the TMEM182 family.</text>
</comment>
<comment type="sequence caution" evidence="8">
    <conflict type="erroneous initiation">
        <sequence resource="EMBL-CDS" id="AAH73844"/>
    </conflict>
    <text>Extended N-terminus.</text>
</comment>
<comment type="sequence caution" evidence="8">
    <conflict type="erroneous initiation">
        <sequence resource="EMBL-CDS" id="AAI07695"/>
    </conflict>
    <text>Extended N-terminus.</text>
</comment>